<dbReference type="EC" id="3.2.2.-" evidence="1"/>
<dbReference type="EMBL" id="AP006716">
    <property type="protein sequence ID" value="BAE04023.1"/>
    <property type="molecule type" value="Genomic_DNA"/>
</dbReference>
<dbReference type="RefSeq" id="WP_011275039.1">
    <property type="nucleotide sequence ID" value="NC_007168.1"/>
</dbReference>
<dbReference type="SMR" id="Q4L8K2"/>
<dbReference type="KEGG" id="sha:SH0714"/>
<dbReference type="eggNOG" id="COG2094">
    <property type="taxonomic scope" value="Bacteria"/>
</dbReference>
<dbReference type="HOGENOM" id="CLU_060471_2_0_9"/>
<dbReference type="OrthoDB" id="9794313at2"/>
<dbReference type="Proteomes" id="UP000000543">
    <property type="component" value="Chromosome"/>
</dbReference>
<dbReference type="GO" id="GO:0003905">
    <property type="term" value="F:alkylbase DNA N-glycosylase activity"/>
    <property type="evidence" value="ECO:0007669"/>
    <property type="project" value="InterPro"/>
</dbReference>
<dbReference type="GO" id="GO:0003677">
    <property type="term" value="F:DNA binding"/>
    <property type="evidence" value="ECO:0007669"/>
    <property type="project" value="InterPro"/>
</dbReference>
<dbReference type="GO" id="GO:0006284">
    <property type="term" value="P:base-excision repair"/>
    <property type="evidence" value="ECO:0007669"/>
    <property type="project" value="InterPro"/>
</dbReference>
<dbReference type="CDD" id="cd00540">
    <property type="entry name" value="AAG"/>
    <property type="match status" value="1"/>
</dbReference>
<dbReference type="FunFam" id="3.10.300.10:FF:000001">
    <property type="entry name" value="Putative 3-methyladenine DNA glycosylase"/>
    <property type="match status" value="1"/>
</dbReference>
<dbReference type="Gene3D" id="3.10.300.10">
    <property type="entry name" value="Methylpurine-DNA glycosylase (MPG)"/>
    <property type="match status" value="1"/>
</dbReference>
<dbReference type="HAMAP" id="MF_00527">
    <property type="entry name" value="3MGH"/>
    <property type="match status" value="1"/>
</dbReference>
<dbReference type="InterPro" id="IPR011034">
    <property type="entry name" value="Formyl_transferase-like_C_sf"/>
</dbReference>
<dbReference type="InterPro" id="IPR003180">
    <property type="entry name" value="MPG"/>
</dbReference>
<dbReference type="InterPro" id="IPR036995">
    <property type="entry name" value="MPG_sf"/>
</dbReference>
<dbReference type="NCBIfam" id="TIGR00567">
    <property type="entry name" value="3mg"/>
    <property type="match status" value="1"/>
</dbReference>
<dbReference type="PANTHER" id="PTHR10429">
    <property type="entry name" value="DNA-3-METHYLADENINE GLYCOSYLASE"/>
    <property type="match status" value="1"/>
</dbReference>
<dbReference type="PANTHER" id="PTHR10429:SF0">
    <property type="entry name" value="DNA-3-METHYLADENINE GLYCOSYLASE"/>
    <property type="match status" value="1"/>
</dbReference>
<dbReference type="Pfam" id="PF02245">
    <property type="entry name" value="Pur_DNA_glyco"/>
    <property type="match status" value="1"/>
</dbReference>
<dbReference type="SUPFAM" id="SSF50486">
    <property type="entry name" value="FMT C-terminal domain-like"/>
    <property type="match status" value="1"/>
</dbReference>
<proteinExistence type="inferred from homology"/>
<name>3MGH_STAHJ</name>
<keyword id="KW-0227">DNA damage</keyword>
<keyword id="KW-0234">DNA repair</keyword>
<keyword id="KW-0378">Hydrolase</keyword>
<organism>
    <name type="scientific">Staphylococcus haemolyticus (strain JCSC1435)</name>
    <dbReference type="NCBI Taxonomy" id="279808"/>
    <lineage>
        <taxon>Bacteria</taxon>
        <taxon>Bacillati</taxon>
        <taxon>Bacillota</taxon>
        <taxon>Bacilli</taxon>
        <taxon>Bacillales</taxon>
        <taxon>Staphylococcaceae</taxon>
        <taxon>Staphylococcus</taxon>
    </lineage>
</organism>
<reference key="1">
    <citation type="journal article" date="2005" name="J. Bacteriol.">
        <title>Whole-genome sequencing of Staphylococcus haemolyticus uncovers the extreme plasticity of its genome and the evolution of human-colonizing staphylococcal species.</title>
        <authorList>
            <person name="Takeuchi F."/>
            <person name="Watanabe S."/>
            <person name="Baba T."/>
            <person name="Yuzawa H."/>
            <person name="Ito T."/>
            <person name="Morimoto Y."/>
            <person name="Kuroda M."/>
            <person name="Cui L."/>
            <person name="Takahashi M."/>
            <person name="Ankai A."/>
            <person name="Baba S."/>
            <person name="Fukui S."/>
            <person name="Lee J.C."/>
            <person name="Hiramatsu K."/>
        </authorList>
    </citation>
    <scope>NUCLEOTIDE SEQUENCE [LARGE SCALE GENOMIC DNA]</scope>
    <source>
        <strain>JCSC1435</strain>
    </source>
</reference>
<feature type="chain" id="PRO_0000100111" description="Putative 3-methyladenine DNA glycosylase">
    <location>
        <begin position="1"/>
        <end position="202"/>
    </location>
</feature>
<gene>
    <name type="ordered locus">SH0714</name>
</gene>
<sequence>MDFVSRPTTETAKALLGVKVIYEDEFQTYSGYIVETEAYLGFTDRAAHGFGGKQTPKVTSLYKRGGTIYGHVMHTHLLVNFVTQNEGVPEGVLIRAIEPLDGIEMMKHNRNKSGYELTNGPGKWTKAFNIPRAIDGATLNDCRLSIDTKHRKYPRDIVESARIGIPNKGDWTNKPLRYTVKGNPFVSHIRKSDCLNPDETWK</sequence>
<accession>Q4L8K2</accession>
<evidence type="ECO:0000255" key="1">
    <source>
        <dbReference type="HAMAP-Rule" id="MF_00527"/>
    </source>
</evidence>
<protein>
    <recommendedName>
        <fullName evidence="1">Putative 3-methyladenine DNA glycosylase</fullName>
        <ecNumber evidence="1">3.2.2.-</ecNumber>
    </recommendedName>
</protein>
<comment type="similarity">
    <text evidence="1">Belongs to the DNA glycosylase MPG family.</text>
</comment>